<accession>B9M910</accession>
<keyword id="KW-0067">ATP-binding</keyword>
<keyword id="KW-0418">Kinase</keyword>
<keyword id="KW-0545">Nucleotide biosynthesis</keyword>
<keyword id="KW-0547">Nucleotide-binding</keyword>
<keyword id="KW-1185">Reference proteome</keyword>
<keyword id="KW-0808">Transferase</keyword>
<dbReference type="EC" id="2.7.4.9" evidence="1"/>
<dbReference type="EMBL" id="CP001390">
    <property type="protein sequence ID" value="ACM20506.1"/>
    <property type="molecule type" value="Genomic_DNA"/>
</dbReference>
<dbReference type="RefSeq" id="WP_012647235.1">
    <property type="nucleotide sequence ID" value="NC_011979.1"/>
</dbReference>
<dbReference type="SMR" id="B9M910"/>
<dbReference type="STRING" id="316067.Geob_2152"/>
<dbReference type="KEGG" id="geo:Geob_2152"/>
<dbReference type="eggNOG" id="COG0125">
    <property type="taxonomic scope" value="Bacteria"/>
</dbReference>
<dbReference type="HOGENOM" id="CLU_049131_0_2_7"/>
<dbReference type="OrthoDB" id="9774907at2"/>
<dbReference type="Proteomes" id="UP000007721">
    <property type="component" value="Chromosome"/>
</dbReference>
<dbReference type="GO" id="GO:0005829">
    <property type="term" value="C:cytosol"/>
    <property type="evidence" value="ECO:0007669"/>
    <property type="project" value="TreeGrafter"/>
</dbReference>
<dbReference type="GO" id="GO:0005524">
    <property type="term" value="F:ATP binding"/>
    <property type="evidence" value="ECO:0007669"/>
    <property type="project" value="UniProtKB-UniRule"/>
</dbReference>
<dbReference type="GO" id="GO:0004798">
    <property type="term" value="F:dTMP kinase activity"/>
    <property type="evidence" value="ECO:0007669"/>
    <property type="project" value="UniProtKB-UniRule"/>
</dbReference>
<dbReference type="GO" id="GO:0006233">
    <property type="term" value="P:dTDP biosynthetic process"/>
    <property type="evidence" value="ECO:0007669"/>
    <property type="project" value="InterPro"/>
</dbReference>
<dbReference type="GO" id="GO:0006235">
    <property type="term" value="P:dTTP biosynthetic process"/>
    <property type="evidence" value="ECO:0007669"/>
    <property type="project" value="UniProtKB-UniRule"/>
</dbReference>
<dbReference type="GO" id="GO:0006227">
    <property type="term" value="P:dUDP biosynthetic process"/>
    <property type="evidence" value="ECO:0007669"/>
    <property type="project" value="TreeGrafter"/>
</dbReference>
<dbReference type="CDD" id="cd01672">
    <property type="entry name" value="TMPK"/>
    <property type="match status" value="1"/>
</dbReference>
<dbReference type="FunFam" id="3.40.50.300:FF:000225">
    <property type="entry name" value="Thymidylate kinase"/>
    <property type="match status" value="1"/>
</dbReference>
<dbReference type="Gene3D" id="3.40.50.300">
    <property type="entry name" value="P-loop containing nucleotide triphosphate hydrolases"/>
    <property type="match status" value="1"/>
</dbReference>
<dbReference type="HAMAP" id="MF_00165">
    <property type="entry name" value="Thymidylate_kinase"/>
    <property type="match status" value="1"/>
</dbReference>
<dbReference type="InterPro" id="IPR027417">
    <property type="entry name" value="P-loop_NTPase"/>
</dbReference>
<dbReference type="InterPro" id="IPR039430">
    <property type="entry name" value="Thymidylate_kin-like_dom"/>
</dbReference>
<dbReference type="InterPro" id="IPR018094">
    <property type="entry name" value="Thymidylate_kinase"/>
</dbReference>
<dbReference type="NCBIfam" id="TIGR00041">
    <property type="entry name" value="DTMP_kinase"/>
    <property type="match status" value="1"/>
</dbReference>
<dbReference type="PANTHER" id="PTHR10344">
    <property type="entry name" value="THYMIDYLATE KINASE"/>
    <property type="match status" value="1"/>
</dbReference>
<dbReference type="PANTHER" id="PTHR10344:SF4">
    <property type="entry name" value="UMP-CMP KINASE 2, MITOCHONDRIAL"/>
    <property type="match status" value="1"/>
</dbReference>
<dbReference type="Pfam" id="PF02223">
    <property type="entry name" value="Thymidylate_kin"/>
    <property type="match status" value="1"/>
</dbReference>
<dbReference type="SUPFAM" id="SSF52540">
    <property type="entry name" value="P-loop containing nucleoside triphosphate hydrolases"/>
    <property type="match status" value="1"/>
</dbReference>
<comment type="function">
    <text evidence="1">Phosphorylation of dTMP to form dTDP in both de novo and salvage pathways of dTTP synthesis.</text>
</comment>
<comment type="catalytic activity">
    <reaction evidence="1">
        <text>dTMP + ATP = dTDP + ADP</text>
        <dbReference type="Rhea" id="RHEA:13517"/>
        <dbReference type="ChEBI" id="CHEBI:30616"/>
        <dbReference type="ChEBI" id="CHEBI:58369"/>
        <dbReference type="ChEBI" id="CHEBI:63528"/>
        <dbReference type="ChEBI" id="CHEBI:456216"/>
        <dbReference type="EC" id="2.7.4.9"/>
    </reaction>
</comment>
<comment type="similarity">
    <text evidence="1">Belongs to the thymidylate kinase family.</text>
</comment>
<organism>
    <name type="scientific">Geotalea daltonii (strain DSM 22248 / JCM 15807 / FRC-32)</name>
    <name type="common">Geobacter daltonii</name>
    <dbReference type="NCBI Taxonomy" id="316067"/>
    <lineage>
        <taxon>Bacteria</taxon>
        <taxon>Pseudomonadati</taxon>
        <taxon>Thermodesulfobacteriota</taxon>
        <taxon>Desulfuromonadia</taxon>
        <taxon>Geobacterales</taxon>
        <taxon>Geobacteraceae</taxon>
        <taxon>Geotalea</taxon>
    </lineage>
</organism>
<protein>
    <recommendedName>
        <fullName evidence="1">Thymidylate kinase</fullName>
        <ecNumber evidence="1">2.7.4.9</ecNumber>
    </recommendedName>
    <alternativeName>
        <fullName evidence="1">dTMP kinase</fullName>
    </alternativeName>
</protein>
<gene>
    <name evidence="1" type="primary">tmk</name>
    <name type="ordered locus">Geob_2152</name>
</gene>
<reference key="1">
    <citation type="submission" date="2009-01" db="EMBL/GenBank/DDBJ databases">
        <title>Complete sequence of Geobacter sp. FRC-32.</title>
        <authorList>
            <consortium name="US DOE Joint Genome Institute"/>
            <person name="Lucas S."/>
            <person name="Copeland A."/>
            <person name="Lapidus A."/>
            <person name="Glavina del Rio T."/>
            <person name="Dalin E."/>
            <person name="Tice H."/>
            <person name="Bruce D."/>
            <person name="Goodwin L."/>
            <person name="Pitluck S."/>
            <person name="Saunders E."/>
            <person name="Brettin T."/>
            <person name="Detter J.C."/>
            <person name="Han C."/>
            <person name="Larimer F."/>
            <person name="Land M."/>
            <person name="Hauser L."/>
            <person name="Kyrpides N."/>
            <person name="Ovchinnikova G."/>
            <person name="Kostka J."/>
            <person name="Richardson P."/>
        </authorList>
    </citation>
    <scope>NUCLEOTIDE SEQUENCE [LARGE SCALE GENOMIC DNA]</scope>
    <source>
        <strain>DSM 22248 / JCM 15807 / FRC-32</strain>
    </source>
</reference>
<feature type="chain" id="PRO_1000123574" description="Thymidylate kinase">
    <location>
        <begin position="1"/>
        <end position="214"/>
    </location>
</feature>
<feature type="binding site" evidence="1">
    <location>
        <begin position="9"/>
        <end position="16"/>
    </location>
    <ligand>
        <name>ATP</name>
        <dbReference type="ChEBI" id="CHEBI:30616"/>
    </ligand>
</feature>
<name>KTHY_GEODF</name>
<sequence>MGCFITFEGIEGCGKTTQIKLLEQHLAEKGFKVLLTREPGGCPIADQIRAILLDAANSAMTPSAELLLYAAARAQHVEEVIKPALADDCIVLCDRFTDATVAYQGYGRGLDLDSIGYLNQLATSGLKPQLTILLDCPVEVGLKRALARINGISAGAREERFELESTLFHQKVRNGYLKLAENEKGRFLIVDGGTNVDETRVAVTTAVIGRLNGN</sequence>
<proteinExistence type="inferred from homology"/>
<evidence type="ECO:0000255" key="1">
    <source>
        <dbReference type="HAMAP-Rule" id="MF_00165"/>
    </source>
</evidence>